<reference key="1">
    <citation type="journal article" date="2006" name="Proc. Natl. Acad. Sci. U.S.A.">
        <title>Genomic analysis of the uncultivated marine crenarchaeote Cenarchaeum symbiosum.</title>
        <authorList>
            <person name="Hallam S.J."/>
            <person name="Konstantinidis K.T."/>
            <person name="Putnam N."/>
            <person name="Schleper C."/>
            <person name="Watanabe Y."/>
            <person name="Sugahara J."/>
            <person name="Preston C."/>
            <person name="de la Torre J."/>
            <person name="Richardson P.M."/>
            <person name="DeLong E.F."/>
        </authorList>
    </citation>
    <scope>NUCLEOTIDE SEQUENCE [LARGE SCALE GENOMIC DNA]</scope>
    <source>
        <strain>A</strain>
    </source>
</reference>
<sequence>MGAREILEVSKPRIVLLLVITAVTTMYAGDALSAGEPGPDLWDYAHLMAAGALASAGSSALNHYYDRDIDPKMRRTARRPIPSGRIGENIVLAYGLAISSAAVVYAYFLLNAPTAFFIALGIFSYVIIYTAWLKRTNRSNIVIGGIAGSAASWAGWTAATGTLDLLGFLIGFLVFVWTPSHFWCLAMKIREDYEAAGVPMLPVVIGMQRTSKYILGNTLLLLPYSLALYAFGMGLVYLVIAVASGGLMLVYHYKLTKTPTPDFAWKAYKVTAPYLTIIFAAVALDAAFHYPFPFPF</sequence>
<organism>
    <name type="scientific">Cenarchaeum symbiosum (strain A)</name>
    <dbReference type="NCBI Taxonomy" id="414004"/>
    <lineage>
        <taxon>Archaea</taxon>
        <taxon>Nitrososphaerota</taxon>
        <taxon>Candidatus Cenarchaeales</taxon>
        <taxon>Candidatus Cenarchaeaceae</taxon>
        <taxon>Candidatus Cenarchaeum</taxon>
    </lineage>
</organism>
<evidence type="ECO:0000255" key="1">
    <source>
        <dbReference type="HAMAP-Rule" id="MF_00154"/>
    </source>
</evidence>
<evidence type="ECO:0000305" key="2"/>
<protein>
    <recommendedName>
        <fullName evidence="1">Protoheme IX farnesyltransferase 1</fullName>
        <ecNumber evidence="1">2.5.1.141</ecNumber>
    </recommendedName>
    <alternativeName>
        <fullName evidence="1">Heme B farnesyltransferase 1</fullName>
    </alternativeName>
    <alternativeName>
        <fullName evidence="1">Heme O synthase 1</fullName>
    </alternativeName>
</protein>
<keyword id="KW-1003">Cell membrane</keyword>
<keyword id="KW-0350">Heme biosynthesis</keyword>
<keyword id="KW-0472">Membrane</keyword>
<keyword id="KW-1185">Reference proteome</keyword>
<keyword id="KW-0808">Transferase</keyword>
<keyword id="KW-0812">Transmembrane</keyword>
<keyword id="KW-1133">Transmembrane helix</keyword>
<feature type="chain" id="PRO_0000327193" description="Protoheme IX farnesyltransferase 1">
    <location>
        <begin position="1"/>
        <end position="296"/>
    </location>
</feature>
<feature type="transmembrane region" description="Helical" evidence="1">
    <location>
        <begin position="14"/>
        <end position="34"/>
    </location>
</feature>
<feature type="transmembrane region" description="Helical" evidence="1">
    <location>
        <begin position="41"/>
        <end position="61"/>
    </location>
</feature>
<feature type="transmembrane region" description="Helical" evidence="1">
    <location>
        <begin position="86"/>
        <end position="106"/>
    </location>
</feature>
<feature type="transmembrane region" description="Helical" evidence="1">
    <location>
        <begin position="108"/>
        <end position="128"/>
    </location>
</feature>
<feature type="transmembrane region" description="Helical" evidence="1">
    <location>
        <begin position="141"/>
        <end position="161"/>
    </location>
</feature>
<feature type="transmembrane region" description="Helical" evidence="1">
    <location>
        <begin position="165"/>
        <end position="185"/>
    </location>
</feature>
<feature type="transmembrane region" description="Helical" evidence="1">
    <location>
        <begin position="230"/>
        <end position="250"/>
    </location>
</feature>
<feature type="transmembrane region" description="Helical" evidence="1">
    <location>
        <begin position="274"/>
        <end position="294"/>
    </location>
</feature>
<proteinExistence type="inferred from homology"/>
<comment type="function">
    <text evidence="1">Converts heme B (protoheme IX) to heme O by substitution of the vinyl group on carbon 2 of heme B porphyrin ring with a hydroxyethyl farnesyl side group.</text>
</comment>
<comment type="catalytic activity">
    <reaction evidence="1">
        <text>heme b + (2E,6E)-farnesyl diphosphate + H2O = Fe(II)-heme o + diphosphate</text>
        <dbReference type="Rhea" id="RHEA:28070"/>
        <dbReference type="ChEBI" id="CHEBI:15377"/>
        <dbReference type="ChEBI" id="CHEBI:33019"/>
        <dbReference type="ChEBI" id="CHEBI:60344"/>
        <dbReference type="ChEBI" id="CHEBI:60530"/>
        <dbReference type="ChEBI" id="CHEBI:175763"/>
        <dbReference type="EC" id="2.5.1.141"/>
    </reaction>
</comment>
<comment type="pathway">
    <text evidence="1">Porphyrin-containing compound metabolism; heme O biosynthesis; heme O from protoheme: step 1/1.</text>
</comment>
<comment type="subcellular location">
    <subcellularLocation>
        <location evidence="1">Cell membrane</location>
        <topology evidence="1">Multi-pass membrane protein</topology>
    </subcellularLocation>
</comment>
<comment type="miscellaneous">
    <text evidence="1">Carbon 2 of the heme B porphyrin ring is defined according to the Fischer nomenclature.</text>
</comment>
<comment type="similarity">
    <text evidence="1">Belongs to the UbiA prenyltransferase family. Protoheme IX farnesyltransferase subfamily.</text>
</comment>
<comment type="sequence caution" evidence="2">
    <conflict type="erroneous initiation">
        <sequence resource="EMBL-CDS" id="ABK77154"/>
    </conflict>
</comment>
<dbReference type="EC" id="2.5.1.141" evidence="1"/>
<dbReference type="EMBL" id="DP000238">
    <property type="protein sequence ID" value="ABK77154.1"/>
    <property type="status" value="ALT_INIT"/>
    <property type="molecule type" value="Genomic_DNA"/>
</dbReference>
<dbReference type="SMR" id="A0RUY7"/>
<dbReference type="STRING" id="414004.CENSYa_0521"/>
<dbReference type="EnsemblBacteria" id="ABK77154">
    <property type="protein sequence ID" value="ABK77154"/>
    <property type="gene ID" value="CENSYa_0521"/>
</dbReference>
<dbReference type="KEGG" id="csy:CENSYa_0521"/>
<dbReference type="PATRIC" id="fig|414004.10.peg.479"/>
<dbReference type="HOGENOM" id="CLU_029631_0_1_2"/>
<dbReference type="UniPathway" id="UPA00834">
    <property type="reaction ID" value="UER00712"/>
</dbReference>
<dbReference type="Proteomes" id="UP000000758">
    <property type="component" value="Chromosome"/>
</dbReference>
<dbReference type="GO" id="GO:0005886">
    <property type="term" value="C:plasma membrane"/>
    <property type="evidence" value="ECO:0007669"/>
    <property type="project" value="UniProtKB-SubCell"/>
</dbReference>
<dbReference type="GO" id="GO:0008495">
    <property type="term" value="F:protoheme IX farnesyltransferase activity"/>
    <property type="evidence" value="ECO:0007669"/>
    <property type="project" value="UniProtKB-UniRule"/>
</dbReference>
<dbReference type="GO" id="GO:0048034">
    <property type="term" value="P:heme O biosynthetic process"/>
    <property type="evidence" value="ECO:0007669"/>
    <property type="project" value="UniProtKB-UniRule"/>
</dbReference>
<dbReference type="CDD" id="cd13957">
    <property type="entry name" value="PT_UbiA_Cox10"/>
    <property type="match status" value="1"/>
</dbReference>
<dbReference type="Gene3D" id="1.10.357.140">
    <property type="entry name" value="UbiA prenyltransferase"/>
    <property type="match status" value="1"/>
</dbReference>
<dbReference type="HAMAP" id="MF_00154">
    <property type="entry name" value="CyoE_CtaB"/>
    <property type="match status" value="1"/>
</dbReference>
<dbReference type="InterPro" id="IPR006369">
    <property type="entry name" value="Protohaem_IX_farnesylTrfase"/>
</dbReference>
<dbReference type="InterPro" id="IPR000537">
    <property type="entry name" value="UbiA_prenyltransferase"/>
</dbReference>
<dbReference type="InterPro" id="IPR030470">
    <property type="entry name" value="UbiA_prenylTrfase_CS"/>
</dbReference>
<dbReference type="InterPro" id="IPR044878">
    <property type="entry name" value="UbiA_sf"/>
</dbReference>
<dbReference type="NCBIfam" id="TIGR01473">
    <property type="entry name" value="cyoE_ctaB"/>
    <property type="match status" value="1"/>
</dbReference>
<dbReference type="NCBIfam" id="NF003349">
    <property type="entry name" value="PRK04375.1-2"/>
    <property type="match status" value="1"/>
</dbReference>
<dbReference type="PANTHER" id="PTHR43448">
    <property type="entry name" value="PROTOHEME IX FARNESYLTRANSFERASE, MITOCHONDRIAL"/>
    <property type="match status" value="1"/>
</dbReference>
<dbReference type="PANTHER" id="PTHR43448:SF2">
    <property type="entry name" value="PROTOHEME IX FARNESYLTRANSFERASE, MITOCHONDRIAL"/>
    <property type="match status" value="1"/>
</dbReference>
<dbReference type="Pfam" id="PF01040">
    <property type="entry name" value="UbiA"/>
    <property type="match status" value="1"/>
</dbReference>
<dbReference type="PROSITE" id="PS00943">
    <property type="entry name" value="UBIA"/>
    <property type="match status" value="1"/>
</dbReference>
<gene>
    <name evidence="1" type="primary">ctaB1</name>
    <name type="ordered locus">CENSYa_0521</name>
</gene>
<accession>A0RUY7</accession>
<name>COXX1_CENSY</name>